<proteinExistence type="inferred from homology"/>
<name>RNT_XYLFT</name>
<gene>
    <name evidence="1" type="primary">rnt</name>
    <name type="ordered locus">PD_1207</name>
</gene>
<keyword id="KW-0269">Exonuclease</keyword>
<keyword id="KW-0378">Hydrolase</keyword>
<keyword id="KW-0460">Magnesium</keyword>
<keyword id="KW-0479">Metal-binding</keyword>
<keyword id="KW-0540">Nuclease</keyword>
<keyword id="KW-1185">Reference proteome</keyword>
<keyword id="KW-0819">tRNA processing</keyword>
<organism>
    <name type="scientific">Xylella fastidiosa (strain Temecula1 / ATCC 700964)</name>
    <dbReference type="NCBI Taxonomy" id="183190"/>
    <lineage>
        <taxon>Bacteria</taxon>
        <taxon>Pseudomonadati</taxon>
        <taxon>Pseudomonadota</taxon>
        <taxon>Gammaproteobacteria</taxon>
        <taxon>Lysobacterales</taxon>
        <taxon>Lysobacteraceae</taxon>
        <taxon>Xylella</taxon>
    </lineage>
</organism>
<comment type="function">
    <text evidence="1">Trims short 3' overhangs of a variety of RNA species, leaving a one or two nucleotide 3' overhang. Responsible for the end-turnover of tRNA: specifically removes the terminal AMP residue from uncharged tRNA (tRNA-C-C-A). Also appears to be involved in tRNA biosynthesis.</text>
</comment>
<comment type="cofactor">
    <cofactor evidence="1">
        <name>Mg(2+)</name>
        <dbReference type="ChEBI" id="CHEBI:18420"/>
    </cofactor>
    <text evidence="1">Binds two Mg(2+) per subunit. The active form of the enzyme binds two Mg(2+) ions in its active site. The first Mg(2+) forms only one salt bridge with the protein.</text>
</comment>
<comment type="subunit">
    <text evidence="1">Homodimer.</text>
</comment>
<comment type="similarity">
    <text evidence="1">Belongs to the RNase T family.</text>
</comment>
<sequence length="211" mass="23443">MMNQSITPPTHPPMSQRFRGYLPVVVDVETGGFNWNHHALLEIACIPIEMDDTGRLYPGEVTSTHVIPAPGTDIDPKSLEVTGIILDHPFRFAKEEKLALEHIFTPVRTTMKKYKCQRAILVGHNAHFDLNFLNAAVTRTAYKRNPFHQFSVFDTVTLAGMAYGQTVLARAVQAAGLDWNAADAHSAVYDAEKTAHLFCTITNIWPLMVAG</sequence>
<protein>
    <recommendedName>
        <fullName evidence="1">Ribonuclease T</fullName>
        <ecNumber evidence="1">3.1.13.-</ecNumber>
    </recommendedName>
    <alternativeName>
        <fullName evidence="1">Exoribonuclease T</fullName>
        <shortName evidence="1">RNase T</shortName>
    </alternativeName>
</protein>
<dbReference type="EC" id="3.1.13.-" evidence="1"/>
<dbReference type="EMBL" id="AE009442">
    <property type="protein sequence ID" value="AAO29058.1"/>
    <property type="molecule type" value="Genomic_DNA"/>
</dbReference>
<dbReference type="SMR" id="Q87C86"/>
<dbReference type="KEGG" id="xft:PD_1207"/>
<dbReference type="HOGENOM" id="CLU_082724_0_0_6"/>
<dbReference type="Proteomes" id="UP000002516">
    <property type="component" value="Chromosome"/>
</dbReference>
<dbReference type="GO" id="GO:0005829">
    <property type="term" value="C:cytosol"/>
    <property type="evidence" value="ECO:0007669"/>
    <property type="project" value="TreeGrafter"/>
</dbReference>
<dbReference type="GO" id="GO:0008408">
    <property type="term" value="F:3'-5' exonuclease activity"/>
    <property type="evidence" value="ECO:0007669"/>
    <property type="project" value="TreeGrafter"/>
</dbReference>
<dbReference type="GO" id="GO:0000287">
    <property type="term" value="F:magnesium ion binding"/>
    <property type="evidence" value="ECO:0007669"/>
    <property type="project" value="UniProtKB-UniRule"/>
</dbReference>
<dbReference type="GO" id="GO:0003676">
    <property type="term" value="F:nucleic acid binding"/>
    <property type="evidence" value="ECO:0007669"/>
    <property type="project" value="InterPro"/>
</dbReference>
<dbReference type="GO" id="GO:0016896">
    <property type="term" value="F:RNA exonuclease activity, producing 5'-phosphomonoesters"/>
    <property type="evidence" value="ECO:0007669"/>
    <property type="project" value="UniProtKB-UniRule"/>
</dbReference>
<dbReference type="GO" id="GO:0045004">
    <property type="term" value="P:DNA replication proofreading"/>
    <property type="evidence" value="ECO:0007669"/>
    <property type="project" value="TreeGrafter"/>
</dbReference>
<dbReference type="GO" id="GO:0008033">
    <property type="term" value="P:tRNA processing"/>
    <property type="evidence" value="ECO:0007669"/>
    <property type="project" value="UniProtKB-KW"/>
</dbReference>
<dbReference type="Gene3D" id="3.30.420.10">
    <property type="entry name" value="Ribonuclease H-like superfamily/Ribonuclease H"/>
    <property type="match status" value="1"/>
</dbReference>
<dbReference type="HAMAP" id="MF_00157">
    <property type="entry name" value="RNase_T"/>
    <property type="match status" value="1"/>
</dbReference>
<dbReference type="InterPro" id="IPR013520">
    <property type="entry name" value="Exonuclease_RNaseT/DNA_pol3"/>
</dbReference>
<dbReference type="InterPro" id="IPR005987">
    <property type="entry name" value="RNase_T"/>
</dbReference>
<dbReference type="InterPro" id="IPR012337">
    <property type="entry name" value="RNaseH-like_sf"/>
</dbReference>
<dbReference type="InterPro" id="IPR036397">
    <property type="entry name" value="RNaseH_sf"/>
</dbReference>
<dbReference type="NCBIfam" id="TIGR01298">
    <property type="entry name" value="RNaseT"/>
    <property type="match status" value="1"/>
</dbReference>
<dbReference type="PANTHER" id="PTHR30231">
    <property type="entry name" value="DNA POLYMERASE III SUBUNIT EPSILON"/>
    <property type="match status" value="1"/>
</dbReference>
<dbReference type="PANTHER" id="PTHR30231:SF2">
    <property type="entry name" value="RIBONUCLEASE T"/>
    <property type="match status" value="1"/>
</dbReference>
<dbReference type="Pfam" id="PF00929">
    <property type="entry name" value="RNase_T"/>
    <property type="match status" value="1"/>
</dbReference>
<dbReference type="SMART" id="SM00479">
    <property type="entry name" value="EXOIII"/>
    <property type="match status" value="1"/>
</dbReference>
<dbReference type="SUPFAM" id="SSF53098">
    <property type="entry name" value="Ribonuclease H-like"/>
    <property type="match status" value="1"/>
</dbReference>
<accession>Q87C86</accession>
<feature type="chain" id="PRO_0000208984" description="Ribonuclease T">
    <location>
        <begin position="1"/>
        <end position="211"/>
    </location>
</feature>
<feature type="domain" description="Exonuclease" evidence="1">
    <location>
        <begin position="24"/>
        <end position="198"/>
    </location>
</feature>
<feature type="active site" description="Proton donor/acceptor" evidence="1">
    <location>
        <position position="185"/>
    </location>
</feature>
<feature type="binding site" evidence="1">
    <location>
        <position position="27"/>
    </location>
    <ligand>
        <name>Mg(2+)</name>
        <dbReference type="ChEBI" id="CHEBI:18420"/>
        <label>1</label>
        <note>catalytic</note>
    </ligand>
</feature>
<feature type="binding site" evidence="1">
    <location>
        <position position="27"/>
    </location>
    <ligand>
        <name>Mg(2+)</name>
        <dbReference type="ChEBI" id="CHEBI:18420"/>
        <label>2</label>
        <note>catalytic</note>
    </ligand>
</feature>
<feature type="binding site" evidence="1">
    <location>
        <position position="29"/>
    </location>
    <ligand>
        <name>Mg(2+)</name>
        <dbReference type="ChEBI" id="CHEBI:18420"/>
        <label>2</label>
        <note>catalytic</note>
    </ligand>
</feature>
<feature type="binding site" evidence="1">
    <location>
        <position position="185"/>
    </location>
    <ligand>
        <name>Mg(2+)</name>
        <dbReference type="ChEBI" id="CHEBI:18420"/>
        <label>2</label>
        <note>catalytic</note>
    </ligand>
</feature>
<feature type="binding site" evidence="1">
    <location>
        <position position="190"/>
    </location>
    <ligand>
        <name>Mg(2+)</name>
        <dbReference type="ChEBI" id="CHEBI:18420"/>
        <label>2</label>
        <note>catalytic</note>
    </ligand>
</feature>
<feature type="site" description="Important for substrate binding and specificity" evidence="1">
    <location>
        <position position="33"/>
    </location>
</feature>
<feature type="site" description="Important for substrate binding and specificity" evidence="1">
    <location>
        <position position="128"/>
    </location>
</feature>
<feature type="site" description="Important for substrate binding and specificity" evidence="1">
    <location>
        <position position="150"/>
    </location>
</feature>
<reference key="1">
    <citation type="journal article" date="2003" name="J. Bacteriol.">
        <title>Comparative analyses of the complete genome sequences of Pierce's disease and citrus variegated chlorosis strains of Xylella fastidiosa.</title>
        <authorList>
            <person name="Van Sluys M.A."/>
            <person name="de Oliveira M.C."/>
            <person name="Monteiro-Vitorello C.B."/>
            <person name="Miyaki C.Y."/>
            <person name="Furlan L.R."/>
            <person name="Camargo L.E.A."/>
            <person name="da Silva A.C.R."/>
            <person name="Moon D.H."/>
            <person name="Takita M.A."/>
            <person name="Lemos E.G.M."/>
            <person name="Machado M.A."/>
            <person name="Ferro M.I.T."/>
            <person name="da Silva F.R."/>
            <person name="Goldman M.H.S."/>
            <person name="Goldman G.H."/>
            <person name="Lemos M.V.F."/>
            <person name="El-Dorry H."/>
            <person name="Tsai S.M."/>
            <person name="Carrer H."/>
            <person name="Carraro D.M."/>
            <person name="de Oliveira R.C."/>
            <person name="Nunes L.R."/>
            <person name="Siqueira W.J."/>
            <person name="Coutinho L.L."/>
            <person name="Kimura E.T."/>
            <person name="Ferro E.S."/>
            <person name="Harakava R."/>
            <person name="Kuramae E.E."/>
            <person name="Marino C.L."/>
            <person name="Giglioti E."/>
            <person name="Abreu I.L."/>
            <person name="Alves L.M.C."/>
            <person name="do Amaral A.M."/>
            <person name="Baia G.S."/>
            <person name="Blanco S.R."/>
            <person name="Brito M.S."/>
            <person name="Cannavan F.S."/>
            <person name="Celestino A.V."/>
            <person name="da Cunha A.F."/>
            <person name="Fenille R.C."/>
            <person name="Ferro J.A."/>
            <person name="Formighieri E.F."/>
            <person name="Kishi L.T."/>
            <person name="Leoni S.G."/>
            <person name="Oliveira A.R."/>
            <person name="Rosa V.E. Jr."/>
            <person name="Sassaki F.T."/>
            <person name="Sena J.A.D."/>
            <person name="de Souza A.A."/>
            <person name="Truffi D."/>
            <person name="Tsukumo F."/>
            <person name="Yanai G.M."/>
            <person name="Zaros L.G."/>
            <person name="Civerolo E.L."/>
            <person name="Simpson A.J.G."/>
            <person name="Almeida N.F. Jr."/>
            <person name="Setubal J.C."/>
            <person name="Kitajima J.P."/>
        </authorList>
    </citation>
    <scope>NUCLEOTIDE SEQUENCE [LARGE SCALE GENOMIC DNA]</scope>
    <source>
        <strain>Temecula1 / ATCC 700964</strain>
    </source>
</reference>
<evidence type="ECO:0000255" key="1">
    <source>
        <dbReference type="HAMAP-Rule" id="MF_00157"/>
    </source>
</evidence>